<reference key="1">
    <citation type="journal article" date="1990" name="Development">
        <title>Isolation of an abdominal-A gene from the locust Schistocerca gregaria and its expression during early embryogenesis.</title>
        <authorList>
            <person name="Tear G."/>
            <person name="Akam M."/>
            <person name="Martinez-Arias A."/>
        </authorList>
    </citation>
    <scope>NUCLEOTIDE SEQUENCE [GENOMIC DNA]</scope>
</reference>
<proteinExistence type="inferred from homology"/>
<keyword id="KW-0217">Developmental protein</keyword>
<keyword id="KW-0238">DNA-binding</keyword>
<keyword id="KW-0371">Homeobox</keyword>
<keyword id="KW-0539">Nucleus</keyword>
<feature type="chain" id="PRO_0000200253" description="Homeobox protein abdominal-A homolog">
    <location>
        <begin position="1" status="less than"/>
        <end position="157"/>
    </location>
</feature>
<feature type="DNA-binding region" description="Homeobox" evidence="1">
    <location>
        <begin position="6"/>
        <end position="65"/>
    </location>
</feature>
<feature type="region of interest" description="Disordered" evidence="2">
    <location>
        <begin position="73"/>
        <end position="157"/>
    </location>
</feature>
<feature type="compositionally biased region" description="Basic and acidic residues" evidence="2">
    <location>
        <begin position="73"/>
        <end position="94"/>
    </location>
</feature>
<feature type="compositionally biased region" description="Low complexity" evidence="2">
    <location>
        <begin position="95"/>
        <end position="116"/>
    </location>
</feature>
<feature type="compositionally biased region" description="Basic and acidic residues" evidence="2">
    <location>
        <begin position="130"/>
        <end position="139"/>
    </location>
</feature>
<feature type="non-terminal residue">
    <location>
        <position position="1"/>
    </location>
</feature>
<accession>P29556</accession>
<gene>
    <name type="primary">ABD-A</name>
</gene>
<dbReference type="EMBL" id="X54674">
    <property type="protein sequence ID" value="CAA38485.1"/>
    <property type="molecule type" value="Genomic_DNA"/>
</dbReference>
<dbReference type="PIR" id="S13803">
    <property type="entry name" value="S13803"/>
</dbReference>
<dbReference type="SMR" id="P29556"/>
<dbReference type="OrthoDB" id="6159439at2759"/>
<dbReference type="GO" id="GO:0005634">
    <property type="term" value="C:nucleus"/>
    <property type="evidence" value="ECO:0007669"/>
    <property type="project" value="UniProtKB-SubCell"/>
</dbReference>
<dbReference type="GO" id="GO:0000981">
    <property type="term" value="F:DNA-binding transcription factor activity, RNA polymerase II-specific"/>
    <property type="evidence" value="ECO:0007669"/>
    <property type="project" value="InterPro"/>
</dbReference>
<dbReference type="GO" id="GO:0000978">
    <property type="term" value="F:RNA polymerase II cis-regulatory region sequence-specific DNA binding"/>
    <property type="evidence" value="ECO:0007669"/>
    <property type="project" value="TreeGrafter"/>
</dbReference>
<dbReference type="GO" id="GO:0009952">
    <property type="term" value="P:anterior/posterior pattern specification"/>
    <property type="evidence" value="ECO:0007669"/>
    <property type="project" value="TreeGrafter"/>
</dbReference>
<dbReference type="GO" id="GO:0000122">
    <property type="term" value="P:negative regulation of transcription by RNA polymerase II"/>
    <property type="evidence" value="ECO:0007669"/>
    <property type="project" value="TreeGrafter"/>
</dbReference>
<dbReference type="CDD" id="cd00086">
    <property type="entry name" value="homeodomain"/>
    <property type="match status" value="1"/>
</dbReference>
<dbReference type="FunFam" id="1.10.10.60:FF:000193">
    <property type="entry name" value="Ultrabithorax, isoform C"/>
    <property type="match status" value="1"/>
</dbReference>
<dbReference type="Gene3D" id="1.10.10.60">
    <property type="entry name" value="Homeodomain-like"/>
    <property type="match status" value="1"/>
</dbReference>
<dbReference type="InterPro" id="IPR022132">
    <property type="entry name" value="Abdominal-A"/>
</dbReference>
<dbReference type="InterPro" id="IPR050296">
    <property type="entry name" value="Antp_homeobox"/>
</dbReference>
<dbReference type="InterPro" id="IPR001356">
    <property type="entry name" value="HD"/>
</dbReference>
<dbReference type="InterPro" id="IPR020479">
    <property type="entry name" value="HD_metazoa"/>
</dbReference>
<dbReference type="InterPro" id="IPR017970">
    <property type="entry name" value="Homeobox_CS"/>
</dbReference>
<dbReference type="InterPro" id="IPR009057">
    <property type="entry name" value="Homeodomain-like_sf"/>
</dbReference>
<dbReference type="PANTHER" id="PTHR45659:SF4">
    <property type="entry name" value="HOMEOBOX PROTEIN ABDOMINAL-A"/>
    <property type="match status" value="1"/>
</dbReference>
<dbReference type="PANTHER" id="PTHR45659">
    <property type="entry name" value="HOMEOBOX PROTEIN HOX"/>
    <property type="match status" value="1"/>
</dbReference>
<dbReference type="Pfam" id="PF12407">
    <property type="entry name" value="Abdominal-A"/>
    <property type="match status" value="1"/>
</dbReference>
<dbReference type="Pfam" id="PF00046">
    <property type="entry name" value="Homeodomain"/>
    <property type="match status" value="1"/>
</dbReference>
<dbReference type="PRINTS" id="PR00024">
    <property type="entry name" value="HOMEOBOX"/>
</dbReference>
<dbReference type="SMART" id="SM00389">
    <property type="entry name" value="HOX"/>
    <property type="match status" value="1"/>
</dbReference>
<dbReference type="SUPFAM" id="SSF46689">
    <property type="entry name" value="Homeodomain-like"/>
    <property type="match status" value="1"/>
</dbReference>
<dbReference type="PROSITE" id="PS00027">
    <property type="entry name" value="HOMEOBOX_1"/>
    <property type="match status" value="1"/>
</dbReference>
<dbReference type="PROSITE" id="PS50071">
    <property type="entry name" value="HOMEOBOX_2"/>
    <property type="match status" value="1"/>
</dbReference>
<name>ABDA_SCHGR</name>
<protein>
    <recommendedName>
        <fullName>Homeobox protein abdominal-A homolog</fullName>
    </recommendedName>
</protein>
<comment type="function">
    <text>Sequence-specific transcription factor which is part of a developmental regulatory system that provides cells with specific positional identities on the anterior-posterior axis.</text>
</comment>
<comment type="subcellular location">
    <subcellularLocation>
        <location evidence="3">Nucleus</location>
    </subcellularLocation>
</comment>
<comment type="similarity">
    <text evidence="3">Belongs to the Antp homeobox family.</text>
</comment>
<sequence length="157" mass="19076">PNGCPRRRGRQTYTRFQTLELEKEFHFNHYLTRRRRIEIAHALCLTERQIKIWFQNRRMKLKKELRAVKEINEQARREREEQDRLKQQQEKKLEQQQQQQQQQQQQQQQQQQQQAPPQQPPQQHHTISHHLHDQHKLGLEKAPPGADLLKAVAKVPT</sequence>
<evidence type="ECO:0000255" key="1">
    <source>
        <dbReference type="PROSITE-ProRule" id="PRU00108"/>
    </source>
</evidence>
<evidence type="ECO:0000256" key="2">
    <source>
        <dbReference type="SAM" id="MobiDB-lite"/>
    </source>
</evidence>
<evidence type="ECO:0000305" key="3"/>
<organism>
    <name type="scientific">Schistocerca gregaria</name>
    <name type="common">Desert locust</name>
    <name type="synonym">Gryllus gregarius</name>
    <dbReference type="NCBI Taxonomy" id="7010"/>
    <lineage>
        <taxon>Eukaryota</taxon>
        <taxon>Metazoa</taxon>
        <taxon>Ecdysozoa</taxon>
        <taxon>Arthropoda</taxon>
        <taxon>Hexapoda</taxon>
        <taxon>Insecta</taxon>
        <taxon>Pterygota</taxon>
        <taxon>Neoptera</taxon>
        <taxon>Polyneoptera</taxon>
        <taxon>Orthoptera</taxon>
        <taxon>Caelifera</taxon>
        <taxon>Acrididea</taxon>
        <taxon>Acridomorpha</taxon>
        <taxon>Acridoidea</taxon>
        <taxon>Acrididae</taxon>
        <taxon>Cyrtacanthacridinae</taxon>
        <taxon>Schistocerca</taxon>
    </lineage>
</organism>